<organism>
    <name type="scientific">Trichormus variabilis (strain ATCC 29413 / PCC 7937)</name>
    <name type="common">Anabaena variabilis</name>
    <dbReference type="NCBI Taxonomy" id="240292"/>
    <lineage>
        <taxon>Bacteria</taxon>
        <taxon>Bacillati</taxon>
        <taxon>Cyanobacteriota</taxon>
        <taxon>Cyanophyceae</taxon>
        <taxon>Nostocales</taxon>
        <taxon>Nostocaceae</taxon>
        <taxon>Trichormus</taxon>
    </lineage>
</organism>
<name>PANCY_TRIV2</name>
<accession>Q3MEJ8</accession>
<comment type="function">
    <text evidence="1">Catalyzes the condensation of pantoate with beta-alanine in an ATP-dependent reaction via a pantoyl-adenylate intermediate.</text>
</comment>
<comment type="function">
    <text evidence="1">Catalyzes the transfer of a phosphate group from ATP to either CMP or dCMP to form CDP or dCDP and ADP, respectively.</text>
</comment>
<comment type="catalytic activity">
    <reaction evidence="1">
        <text>(R)-pantoate + beta-alanine + ATP = (R)-pantothenate + AMP + diphosphate + H(+)</text>
        <dbReference type="Rhea" id="RHEA:10912"/>
        <dbReference type="ChEBI" id="CHEBI:15378"/>
        <dbReference type="ChEBI" id="CHEBI:15980"/>
        <dbReference type="ChEBI" id="CHEBI:29032"/>
        <dbReference type="ChEBI" id="CHEBI:30616"/>
        <dbReference type="ChEBI" id="CHEBI:33019"/>
        <dbReference type="ChEBI" id="CHEBI:57966"/>
        <dbReference type="ChEBI" id="CHEBI:456215"/>
        <dbReference type="EC" id="6.3.2.1"/>
    </reaction>
</comment>
<comment type="catalytic activity">
    <reaction evidence="1">
        <text>CMP + ATP = CDP + ADP</text>
        <dbReference type="Rhea" id="RHEA:11600"/>
        <dbReference type="ChEBI" id="CHEBI:30616"/>
        <dbReference type="ChEBI" id="CHEBI:58069"/>
        <dbReference type="ChEBI" id="CHEBI:60377"/>
        <dbReference type="ChEBI" id="CHEBI:456216"/>
        <dbReference type="EC" id="2.7.4.25"/>
    </reaction>
</comment>
<comment type="catalytic activity">
    <reaction evidence="1">
        <text>dCMP + ATP = dCDP + ADP</text>
        <dbReference type="Rhea" id="RHEA:25094"/>
        <dbReference type="ChEBI" id="CHEBI:30616"/>
        <dbReference type="ChEBI" id="CHEBI:57566"/>
        <dbReference type="ChEBI" id="CHEBI:58593"/>
        <dbReference type="ChEBI" id="CHEBI:456216"/>
        <dbReference type="EC" id="2.7.4.25"/>
    </reaction>
</comment>
<comment type="pathway">
    <text evidence="1">Cofactor biosynthesis; (R)-pantothenate biosynthesis; (R)-pantothenate from (R)-pantoate and beta-alanine: step 1/1.</text>
</comment>
<comment type="subcellular location">
    <subcellularLocation>
        <location evidence="1">Cytoplasm</location>
    </subcellularLocation>
</comment>
<comment type="similarity">
    <text evidence="1">In the N-terminal section; belongs to the pantothenate synthetase family.</text>
</comment>
<comment type="similarity">
    <text evidence="1">In the C-terminal section; belongs to the cytidylate kinase family. Type 1 subfamily.</text>
</comment>
<proteinExistence type="inferred from homology"/>
<keyword id="KW-0067">ATP-binding</keyword>
<keyword id="KW-0963">Cytoplasm</keyword>
<keyword id="KW-0418">Kinase</keyword>
<keyword id="KW-0436">Ligase</keyword>
<keyword id="KW-0511">Multifunctional enzyme</keyword>
<keyword id="KW-0547">Nucleotide-binding</keyword>
<keyword id="KW-0566">Pantothenate biosynthesis</keyword>
<keyword id="KW-0808">Transferase</keyword>
<gene>
    <name evidence="1" type="primary">panC/cmk</name>
    <name type="ordered locus">Ava_0964</name>
</gene>
<sequence>MRLLTTVAALRCYLNKRRWESQLTASEEQILDSMTSWYQTAIGLVPTMGSLHQGHLSLIERARHENSTVIVSIFINPLQFGPNEDYGRYPRTLEQDRQLCEQAGVDAIFAPSPEELGIPQKNIQESQVTQVIPPSVMISGLCGHSRLGHFQGVATIVTKLLNLVQPDRAYFGQKDGQQLAVIKRLVADLNLPVEIVACPTVREASGLACSSRNQYLTAPEKQQAAVLYRGLLQAEAAFKAGVRYSSRLREVVRQELAKVSSVLVEYIELVEPTTLMPLDKIQEEGMLAIAARLGSTRLIDNTILRDRQPIIAIDGPAGAGKSTVARQVATKLGLVYLDTGAMYRAVTWLVLQQGIAIDDDCAIAELANNCKIELTPSQDLQSPVRVWINDTDVTQDIRTIEVTSQVSAIAAQAAVREALVKQQQRWGKRGGLVAEGRDIGTHVFPDAEVKIFLTASVGERARRRQQDFQKQGQPEVSLEQLEKDIAERDWKDSTRKVSPLQKAADAVELQTDGLSISDVASQIVDYYQQRLSQW</sequence>
<feature type="chain" id="PRO_0000239786" description="Bifunctional pantoate ligase/cytidylate kinase">
    <location>
        <begin position="1"/>
        <end position="534"/>
    </location>
</feature>
<feature type="region of interest" description="Pantoate--beta-alanine ligase" evidence="1">
    <location>
        <begin position="1"/>
        <end position="302"/>
    </location>
</feature>
<feature type="region of interest" description="Cytidylate kinase" evidence="1">
    <location>
        <begin position="303"/>
        <end position="534"/>
    </location>
</feature>
<feature type="active site" description="Proton donor" evidence="1">
    <location>
        <position position="55"/>
    </location>
</feature>
<feature type="binding site" evidence="1">
    <location>
        <begin position="48"/>
        <end position="55"/>
    </location>
    <ligand>
        <name>ATP</name>
        <dbReference type="ChEBI" id="CHEBI:30616"/>
    </ligand>
</feature>
<feature type="binding site" evidence="1">
    <location>
        <position position="79"/>
    </location>
    <ligand>
        <name>(R)-pantoate</name>
        <dbReference type="ChEBI" id="CHEBI:15980"/>
    </ligand>
</feature>
<feature type="binding site" evidence="1">
    <location>
        <position position="79"/>
    </location>
    <ligand>
        <name>beta-alanine</name>
        <dbReference type="ChEBI" id="CHEBI:57966"/>
    </ligand>
</feature>
<feature type="binding site" evidence="1">
    <location>
        <begin position="172"/>
        <end position="175"/>
    </location>
    <ligand>
        <name>ATP</name>
        <dbReference type="ChEBI" id="CHEBI:30616"/>
    </ligand>
</feature>
<feature type="binding site" evidence="1">
    <location>
        <position position="178"/>
    </location>
    <ligand>
        <name>(R)-pantoate</name>
        <dbReference type="ChEBI" id="CHEBI:15980"/>
    </ligand>
</feature>
<feature type="binding site" evidence="1">
    <location>
        <position position="201"/>
    </location>
    <ligand>
        <name>ATP</name>
        <dbReference type="ChEBI" id="CHEBI:30616"/>
    </ligand>
</feature>
<feature type="binding site" evidence="1">
    <location>
        <begin position="209"/>
        <end position="212"/>
    </location>
    <ligand>
        <name>ATP</name>
        <dbReference type="ChEBI" id="CHEBI:30616"/>
    </ligand>
</feature>
<protein>
    <recommendedName>
        <fullName evidence="1">Bifunctional pantoate ligase/cytidylate kinase</fullName>
    </recommendedName>
    <domain>
        <recommendedName>
            <fullName evidence="1">Pantothenate synthetase</fullName>
            <shortName evidence="1">PS</shortName>
            <ecNumber evidence="1">6.3.2.1</ecNumber>
        </recommendedName>
        <alternativeName>
            <fullName evidence="1">Pantoate--beta-alanine ligase</fullName>
        </alternativeName>
        <alternativeName>
            <fullName evidence="1">Pantoate-activating enzyme</fullName>
        </alternativeName>
    </domain>
    <domain>
        <recommendedName>
            <fullName evidence="1">Cytidylate kinase</fullName>
            <shortName evidence="1">CK</shortName>
            <ecNumber evidence="1">2.7.4.25</ecNumber>
        </recommendedName>
        <alternativeName>
            <fullName evidence="1">Cytidine monophosphate kinase</fullName>
            <shortName evidence="1">CMP kinase</shortName>
        </alternativeName>
    </domain>
</protein>
<reference key="1">
    <citation type="journal article" date="2014" name="Stand. Genomic Sci.">
        <title>Complete genome sequence of Anabaena variabilis ATCC 29413.</title>
        <authorList>
            <person name="Thiel T."/>
            <person name="Pratte B.S."/>
            <person name="Zhong J."/>
            <person name="Goodwin L."/>
            <person name="Copeland A."/>
            <person name="Lucas S."/>
            <person name="Han C."/>
            <person name="Pitluck S."/>
            <person name="Land M.L."/>
            <person name="Kyrpides N.C."/>
            <person name="Woyke T."/>
        </authorList>
    </citation>
    <scope>NUCLEOTIDE SEQUENCE [LARGE SCALE GENOMIC DNA]</scope>
    <source>
        <strain>ATCC 29413 / PCC 7937</strain>
    </source>
</reference>
<evidence type="ECO:0000255" key="1">
    <source>
        <dbReference type="HAMAP-Rule" id="MF_01349"/>
    </source>
</evidence>
<dbReference type="EC" id="6.3.2.1" evidence="1"/>
<dbReference type="EC" id="2.7.4.25" evidence="1"/>
<dbReference type="EMBL" id="CP000117">
    <property type="protein sequence ID" value="ABA20588.1"/>
    <property type="molecule type" value="Genomic_DNA"/>
</dbReference>
<dbReference type="SMR" id="Q3MEJ8"/>
<dbReference type="STRING" id="240292.Ava_0964"/>
<dbReference type="KEGG" id="ava:Ava_0964"/>
<dbReference type="eggNOG" id="COG0283">
    <property type="taxonomic scope" value="Bacteria"/>
</dbReference>
<dbReference type="eggNOG" id="COG0414">
    <property type="taxonomic scope" value="Bacteria"/>
</dbReference>
<dbReference type="HOGENOM" id="CLU_037427_0_0_3"/>
<dbReference type="UniPathway" id="UPA00028">
    <property type="reaction ID" value="UER00005"/>
</dbReference>
<dbReference type="Proteomes" id="UP000002533">
    <property type="component" value="Chromosome"/>
</dbReference>
<dbReference type="GO" id="GO:0005829">
    <property type="term" value="C:cytosol"/>
    <property type="evidence" value="ECO:0007669"/>
    <property type="project" value="TreeGrafter"/>
</dbReference>
<dbReference type="GO" id="GO:0005524">
    <property type="term" value="F:ATP binding"/>
    <property type="evidence" value="ECO:0007669"/>
    <property type="project" value="UniProtKB-UniRule"/>
</dbReference>
<dbReference type="GO" id="GO:0036430">
    <property type="term" value="F:CMP kinase activity"/>
    <property type="evidence" value="ECO:0007669"/>
    <property type="project" value="RHEA"/>
</dbReference>
<dbReference type="GO" id="GO:0036431">
    <property type="term" value="F:dCMP kinase activity"/>
    <property type="evidence" value="ECO:0007669"/>
    <property type="project" value="RHEA"/>
</dbReference>
<dbReference type="GO" id="GO:0004592">
    <property type="term" value="F:pantoate-beta-alanine ligase activity"/>
    <property type="evidence" value="ECO:0007669"/>
    <property type="project" value="UniProtKB-UniRule"/>
</dbReference>
<dbReference type="GO" id="GO:0015949">
    <property type="term" value="P:nucleobase-containing small molecule interconversion"/>
    <property type="evidence" value="ECO:0007669"/>
    <property type="project" value="TreeGrafter"/>
</dbReference>
<dbReference type="GO" id="GO:0015940">
    <property type="term" value="P:pantothenate biosynthetic process"/>
    <property type="evidence" value="ECO:0007669"/>
    <property type="project" value="UniProtKB-UniRule"/>
</dbReference>
<dbReference type="GO" id="GO:0006220">
    <property type="term" value="P:pyrimidine nucleotide metabolic process"/>
    <property type="evidence" value="ECO:0007669"/>
    <property type="project" value="UniProtKB-UniRule"/>
</dbReference>
<dbReference type="CDD" id="cd02020">
    <property type="entry name" value="CMPK"/>
    <property type="match status" value="1"/>
</dbReference>
<dbReference type="CDD" id="cd00560">
    <property type="entry name" value="PanC"/>
    <property type="match status" value="1"/>
</dbReference>
<dbReference type="Gene3D" id="3.40.50.620">
    <property type="entry name" value="HUPs"/>
    <property type="match status" value="1"/>
</dbReference>
<dbReference type="Gene3D" id="3.40.50.300">
    <property type="entry name" value="P-loop containing nucleotide triphosphate hydrolases"/>
    <property type="match status" value="1"/>
</dbReference>
<dbReference type="Gene3D" id="3.30.1300.10">
    <property type="entry name" value="Pantoate-beta-alanine ligase, C-terminal domain"/>
    <property type="match status" value="1"/>
</dbReference>
<dbReference type="HAMAP" id="MF_00238">
    <property type="entry name" value="Cytidyl_kinase_type1"/>
    <property type="match status" value="1"/>
</dbReference>
<dbReference type="HAMAP" id="MF_00158">
    <property type="entry name" value="PanC"/>
    <property type="match status" value="1"/>
</dbReference>
<dbReference type="HAMAP" id="MF_01349">
    <property type="entry name" value="PanCY"/>
    <property type="match status" value="1"/>
</dbReference>
<dbReference type="InterPro" id="IPR004821">
    <property type="entry name" value="Cyt_trans-like"/>
</dbReference>
<dbReference type="InterPro" id="IPR003136">
    <property type="entry name" value="Cytidylate_kin"/>
</dbReference>
<dbReference type="InterPro" id="IPR011994">
    <property type="entry name" value="Cytidylate_kinase_dom"/>
</dbReference>
<dbReference type="InterPro" id="IPR027417">
    <property type="entry name" value="P-loop_NTPase"/>
</dbReference>
<dbReference type="InterPro" id="IPR003721">
    <property type="entry name" value="Pantoate_ligase"/>
</dbReference>
<dbReference type="InterPro" id="IPR024894">
    <property type="entry name" value="Pantoate_ligase/cytidylate_kin"/>
</dbReference>
<dbReference type="InterPro" id="IPR042176">
    <property type="entry name" value="Pantoate_ligase_C"/>
</dbReference>
<dbReference type="InterPro" id="IPR014729">
    <property type="entry name" value="Rossmann-like_a/b/a_fold"/>
</dbReference>
<dbReference type="NCBIfam" id="TIGR00017">
    <property type="entry name" value="cmk"/>
    <property type="match status" value="1"/>
</dbReference>
<dbReference type="NCBIfam" id="TIGR00125">
    <property type="entry name" value="cyt_tran_rel"/>
    <property type="match status" value="1"/>
</dbReference>
<dbReference type="NCBIfam" id="TIGR00018">
    <property type="entry name" value="panC"/>
    <property type="match status" value="1"/>
</dbReference>
<dbReference type="NCBIfam" id="NF010004">
    <property type="entry name" value="PRK13477.1"/>
    <property type="match status" value="1"/>
</dbReference>
<dbReference type="PANTHER" id="PTHR21299:SF2">
    <property type="entry name" value="CYTIDYLATE KINASE"/>
    <property type="match status" value="1"/>
</dbReference>
<dbReference type="PANTHER" id="PTHR21299">
    <property type="entry name" value="CYTIDYLATE KINASE/PANTOATE-BETA-ALANINE LIGASE"/>
    <property type="match status" value="1"/>
</dbReference>
<dbReference type="Pfam" id="PF02224">
    <property type="entry name" value="Cytidylate_kin"/>
    <property type="match status" value="1"/>
</dbReference>
<dbReference type="Pfam" id="PF02569">
    <property type="entry name" value="Pantoate_ligase"/>
    <property type="match status" value="1"/>
</dbReference>
<dbReference type="SUPFAM" id="SSF52374">
    <property type="entry name" value="Nucleotidylyl transferase"/>
    <property type="match status" value="1"/>
</dbReference>
<dbReference type="SUPFAM" id="SSF52540">
    <property type="entry name" value="P-loop containing nucleoside triphosphate hydrolases"/>
    <property type="match status" value="1"/>
</dbReference>